<keyword id="KW-0903">Direct protein sequencing</keyword>
<keyword id="KW-1015">Disulfide bond</keyword>
<keyword id="KW-0960">Knottin</keyword>
<keyword id="KW-0611">Plant defense</keyword>
<accession>C0HK39</accession>
<proteinExistence type="evidence at protein level"/>
<feature type="peptide" id="PRO_0000437518" description="Cyclotide mech-5" evidence="2 3">
    <location>
        <begin position="1"/>
        <end position="31"/>
    </location>
</feature>
<feature type="disulfide bond" evidence="2">
    <location>
        <begin position="5"/>
        <end position="21"/>
    </location>
</feature>
<feature type="disulfide bond" evidence="2">
    <location>
        <begin position="9"/>
        <end position="23"/>
    </location>
</feature>
<feature type="disulfide bond" evidence="2">
    <location>
        <begin position="14"/>
        <end position="28"/>
    </location>
</feature>
<feature type="cross-link" description="Cyclopeptide (Gly-Asp)" evidence="6">
    <location>
        <begin position="1"/>
        <end position="31"/>
    </location>
</feature>
<sequence length="31" mass="3281">GVIPCGESCVFIPCISSVVGCTCKNKVCYRD</sequence>
<dbReference type="SMR" id="C0HK39"/>
<dbReference type="GO" id="GO:0006952">
    <property type="term" value="P:defense response"/>
    <property type="evidence" value="ECO:0007669"/>
    <property type="project" value="UniProtKB-KW"/>
</dbReference>
<dbReference type="InterPro" id="IPR005535">
    <property type="entry name" value="Cyclotide"/>
</dbReference>
<dbReference type="InterPro" id="IPR012323">
    <property type="entry name" value="Cyclotide_bracelet_CS"/>
</dbReference>
<dbReference type="InterPro" id="IPR036146">
    <property type="entry name" value="Cyclotide_sf"/>
</dbReference>
<dbReference type="Pfam" id="PF03784">
    <property type="entry name" value="Cyclotide"/>
    <property type="match status" value="1"/>
</dbReference>
<dbReference type="PIRSF" id="PIRSF037891">
    <property type="entry name" value="Cycloviolacin"/>
    <property type="match status" value="1"/>
</dbReference>
<dbReference type="SUPFAM" id="SSF57038">
    <property type="entry name" value="Cyclotides"/>
    <property type="match status" value="1"/>
</dbReference>
<dbReference type="PROSITE" id="PS51052">
    <property type="entry name" value="CYCLOTIDE"/>
    <property type="match status" value="1"/>
</dbReference>
<dbReference type="PROSITE" id="PS60008">
    <property type="entry name" value="CYCLOTIDE_BRACELET"/>
    <property type="match status" value="1"/>
</dbReference>
<organism evidence="4">
    <name type="scientific">Melicytus chathamicus</name>
    <name type="common">Chatham Island mahoe</name>
    <name type="synonym">Hymenanthera latifolia var. chathamica</name>
    <dbReference type="NCBI Taxonomy" id="453349"/>
    <lineage>
        <taxon>Eukaryota</taxon>
        <taxon>Viridiplantae</taxon>
        <taxon>Streptophyta</taxon>
        <taxon>Embryophyta</taxon>
        <taxon>Tracheophyta</taxon>
        <taxon>Spermatophyta</taxon>
        <taxon>Magnoliopsida</taxon>
        <taxon>eudicotyledons</taxon>
        <taxon>Gunneridae</taxon>
        <taxon>Pentapetalae</taxon>
        <taxon>rosids</taxon>
        <taxon>fabids</taxon>
        <taxon>Malpighiales</taxon>
        <taxon>Violaceae</taxon>
        <taxon>Melicytus</taxon>
    </lineage>
</organism>
<name>CYMC5_MELCT</name>
<reference evidence="5" key="1">
    <citation type="journal article" date="2015" name="ACS Chem. Biol.">
        <title>Lysine-rich cyclotides: a new subclass of circular knotted proteins from Violaceae.</title>
        <authorList>
            <person name="Ravipati A.S."/>
            <person name="Henriques S.T."/>
            <person name="Poth A.G."/>
            <person name="Kaas Q."/>
            <person name="Wang C.K."/>
            <person name="Colgrave M.L."/>
            <person name="Craik D.J."/>
        </authorList>
    </citation>
    <scope>PROTEIN SEQUENCE</scope>
    <scope>MASS SPECTROMETRY</scope>
    <scope>IDENTIFICATION BY MASS SPECTROMETRY</scope>
    <scope>PRESENCE OF DISULFIDE BONDS</scope>
</reference>
<evidence type="ECO:0000250" key="1">
    <source>
        <dbReference type="UniProtKB" id="C0HK36"/>
    </source>
</evidence>
<evidence type="ECO:0000255" key="2">
    <source>
        <dbReference type="PROSITE-ProRule" id="PRU00395"/>
    </source>
</evidence>
<evidence type="ECO:0000269" key="3">
    <source>
    </source>
</evidence>
<evidence type="ECO:0000303" key="4">
    <source>
    </source>
</evidence>
<evidence type="ECO:0000305" key="5"/>
<evidence type="ECO:0000305" key="6">
    <source>
    </source>
</evidence>
<comment type="function">
    <text evidence="1 2">Probably participates in a plant defense mechanism (Potential). Binds to and induces leakage in phospholipd membranes, particularly ones containing 1-palmitoyl-2-oleophosphatidylethanolamine (POPE) (By similarity).</text>
</comment>
<comment type="domain">
    <text evidence="5">The presence of a 'disulfide through disulfide knot' structurally defines this protein as a knottin.</text>
</comment>
<comment type="PTM">
    <text evidence="2">This is a cyclic peptide.</text>
</comment>
<comment type="PTM">
    <text evidence="3">Contains 3 disulfide bonds.</text>
</comment>
<comment type="mass spectrometry" mass="3254.45" method="Electrospray" evidence="3"/>
<comment type="similarity">
    <text evidence="2">Belongs to the cyclotide family. Bracelet subfamily.</text>
</comment>
<comment type="caution">
    <text evidence="2">This peptide is cyclic. The start position was chosen by similarity to Oak1 (kalata B1) for which the DNA sequence is known.</text>
</comment>
<protein>
    <recommendedName>
        <fullName evidence="4">Cyclotide mech-5</fullName>
    </recommendedName>
</protein>